<gene>
    <name evidence="1" type="primary">hisB</name>
    <name type="ordered locus">BRADO0212</name>
</gene>
<evidence type="ECO:0000255" key="1">
    <source>
        <dbReference type="HAMAP-Rule" id="MF_00076"/>
    </source>
</evidence>
<protein>
    <recommendedName>
        <fullName evidence="1">Imidazoleglycerol-phosphate dehydratase</fullName>
        <shortName evidence="1">IGPD</shortName>
        <ecNumber evidence="1">4.2.1.19</ecNumber>
    </recommendedName>
</protein>
<proteinExistence type="inferred from homology"/>
<comment type="catalytic activity">
    <reaction evidence="1">
        <text>D-erythro-1-(imidazol-4-yl)glycerol 3-phosphate = 3-(imidazol-4-yl)-2-oxopropyl phosphate + H2O</text>
        <dbReference type="Rhea" id="RHEA:11040"/>
        <dbReference type="ChEBI" id="CHEBI:15377"/>
        <dbReference type="ChEBI" id="CHEBI:57766"/>
        <dbReference type="ChEBI" id="CHEBI:58278"/>
        <dbReference type="EC" id="4.2.1.19"/>
    </reaction>
</comment>
<comment type="pathway">
    <text evidence="1">Amino-acid biosynthesis; L-histidine biosynthesis; L-histidine from 5-phospho-alpha-D-ribose 1-diphosphate: step 6/9.</text>
</comment>
<comment type="subcellular location">
    <subcellularLocation>
        <location evidence="1">Cytoplasm</location>
    </subcellularLocation>
</comment>
<comment type="similarity">
    <text evidence="1">Belongs to the imidazoleglycerol-phosphate dehydratase family.</text>
</comment>
<dbReference type="EC" id="4.2.1.19" evidence="1"/>
<dbReference type="EMBL" id="CU234118">
    <property type="protein sequence ID" value="CAL74177.1"/>
    <property type="molecule type" value="Genomic_DNA"/>
</dbReference>
<dbReference type="RefSeq" id="WP_011923465.1">
    <property type="nucleotide sequence ID" value="NC_009445.1"/>
</dbReference>
<dbReference type="SMR" id="A4YJV1"/>
<dbReference type="STRING" id="114615.BRADO0212"/>
<dbReference type="KEGG" id="bra:BRADO0212"/>
<dbReference type="eggNOG" id="COG0131">
    <property type="taxonomic scope" value="Bacteria"/>
</dbReference>
<dbReference type="HOGENOM" id="CLU_044308_3_0_5"/>
<dbReference type="OrthoDB" id="9813612at2"/>
<dbReference type="UniPathway" id="UPA00031">
    <property type="reaction ID" value="UER00011"/>
</dbReference>
<dbReference type="Proteomes" id="UP000001994">
    <property type="component" value="Chromosome"/>
</dbReference>
<dbReference type="GO" id="GO:0005737">
    <property type="term" value="C:cytoplasm"/>
    <property type="evidence" value="ECO:0007669"/>
    <property type="project" value="UniProtKB-SubCell"/>
</dbReference>
<dbReference type="GO" id="GO:0004424">
    <property type="term" value="F:imidazoleglycerol-phosphate dehydratase activity"/>
    <property type="evidence" value="ECO:0007669"/>
    <property type="project" value="UniProtKB-UniRule"/>
</dbReference>
<dbReference type="GO" id="GO:0000105">
    <property type="term" value="P:L-histidine biosynthetic process"/>
    <property type="evidence" value="ECO:0007669"/>
    <property type="project" value="UniProtKB-UniRule"/>
</dbReference>
<dbReference type="CDD" id="cd07914">
    <property type="entry name" value="IGPD"/>
    <property type="match status" value="1"/>
</dbReference>
<dbReference type="FunFam" id="3.30.230.40:FF:000001">
    <property type="entry name" value="Imidazoleglycerol-phosphate dehydratase HisB"/>
    <property type="match status" value="1"/>
</dbReference>
<dbReference type="FunFam" id="3.30.230.40:FF:000003">
    <property type="entry name" value="Imidazoleglycerol-phosphate dehydratase HisB"/>
    <property type="match status" value="1"/>
</dbReference>
<dbReference type="Gene3D" id="3.30.230.40">
    <property type="entry name" value="Imidazole glycerol phosphate dehydratase, domain 1"/>
    <property type="match status" value="2"/>
</dbReference>
<dbReference type="HAMAP" id="MF_00076">
    <property type="entry name" value="HisB"/>
    <property type="match status" value="1"/>
</dbReference>
<dbReference type="InterPro" id="IPR038494">
    <property type="entry name" value="IGPD_sf"/>
</dbReference>
<dbReference type="InterPro" id="IPR000807">
    <property type="entry name" value="ImidazoleglycerolP_deHydtase"/>
</dbReference>
<dbReference type="InterPro" id="IPR020565">
    <property type="entry name" value="ImidazoleglycerP_deHydtase_CS"/>
</dbReference>
<dbReference type="InterPro" id="IPR020568">
    <property type="entry name" value="Ribosomal_Su5_D2-typ_SF"/>
</dbReference>
<dbReference type="NCBIfam" id="NF002109">
    <property type="entry name" value="PRK00951.1-5"/>
    <property type="match status" value="1"/>
</dbReference>
<dbReference type="NCBIfam" id="NF002111">
    <property type="entry name" value="PRK00951.2-1"/>
    <property type="match status" value="1"/>
</dbReference>
<dbReference type="NCBIfam" id="NF002114">
    <property type="entry name" value="PRK00951.2-4"/>
    <property type="match status" value="1"/>
</dbReference>
<dbReference type="PANTHER" id="PTHR23133:SF2">
    <property type="entry name" value="IMIDAZOLEGLYCEROL-PHOSPHATE DEHYDRATASE"/>
    <property type="match status" value="1"/>
</dbReference>
<dbReference type="PANTHER" id="PTHR23133">
    <property type="entry name" value="IMIDAZOLEGLYCEROL-PHOSPHATE DEHYDRATASE HIS7"/>
    <property type="match status" value="1"/>
</dbReference>
<dbReference type="Pfam" id="PF00475">
    <property type="entry name" value="IGPD"/>
    <property type="match status" value="1"/>
</dbReference>
<dbReference type="SUPFAM" id="SSF54211">
    <property type="entry name" value="Ribosomal protein S5 domain 2-like"/>
    <property type="match status" value="2"/>
</dbReference>
<dbReference type="PROSITE" id="PS00954">
    <property type="entry name" value="IGP_DEHYDRATASE_1"/>
    <property type="match status" value="1"/>
</dbReference>
<dbReference type="PROSITE" id="PS00955">
    <property type="entry name" value="IGP_DEHYDRATASE_2"/>
    <property type="match status" value="1"/>
</dbReference>
<reference key="1">
    <citation type="journal article" date="2007" name="Science">
        <title>Legumes symbioses: absence of nod genes in photosynthetic bradyrhizobia.</title>
        <authorList>
            <person name="Giraud E."/>
            <person name="Moulin L."/>
            <person name="Vallenet D."/>
            <person name="Barbe V."/>
            <person name="Cytryn E."/>
            <person name="Avarre J.-C."/>
            <person name="Jaubert M."/>
            <person name="Simon D."/>
            <person name="Cartieaux F."/>
            <person name="Prin Y."/>
            <person name="Bena G."/>
            <person name="Hannibal L."/>
            <person name="Fardoux J."/>
            <person name="Kojadinovic M."/>
            <person name="Vuillet L."/>
            <person name="Lajus A."/>
            <person name="Cruveiller S."/>
            <person name="Rouy Z."/>
            <person name="Mangenot S."/>
            <person name="Segurens B."/>
            <person name="Dossat C."/>
            <person name="Franck W.L."/>
            <person name="Chang W.-S."/>
            <person name="Saunders E."/>
            <person name="Bruce D."/>
            <person name="Richardson P."/>
            <person name="Normand P."/>
            <person name="Dreyfus B."/>
            <person name="Pignol D."/>
            <person name="Stacey G."/>
            <person name="Emerich D."/>
            <person name="Vermeglio A."/>
            <person name="Medigue C."/>
            <person name="Sadowsky M."/>
        </authorList>
    </citation>
    <scope>NUCLEOTIDE SEQUENCE [LARGE SCALE GENOMIC DNA]</scope>
    <source>
        <strain>ORS 278</strain>
    </source>
</reference>
<sequence length="197" mass="21545">MRSAAIKRKTKETDIEVSVNLDGTGVVEIATGIGFFDHMLDLLARHSRIDMTVKAVGDLHIDFHHTTEDVGIALGQAVKQALGDMAGITRYASIHMPMDETLTRVVIDVSGRPMLVFRTAFSRDKIGEFDTELVREWFNAFAMNAGITLHVETLYGENAHHIAESCFKGLARALRAALAIDPRNKGEVPSTKGQLGG</sequence>
<keyword id="KW-0028">Amino-acid biosynthesis</keyword>
<keyword id="KW-0963">Cytoplasm</keyword>
<keyword id="KW-0368">Histidine biosynthesis</keyword>
<keyword id="KW-0456">Lyase</keyword>
<keyword id="KW-1185">Reference proteome</keyword>
<feature type="chain" id="PRO_1000010248" description="Imidazoleglycerol-phosphate dehydratase">
    <location>
        <begin position="1"/>
        <end position="197"/>
    </location>
</feature>
<name>HIS7_BRASO</name>
<organism>
    <name type="scientific">Bradyrhizobium sp. (strain ORS 278)</name>
    <dbReference type="NCBI Taxonomy" id="114615"/>
    <lineage>
        <taxon>Bacteria</taxon>
        <taxon>Pseudomonadati</taxon>
        <taxon>Pseudomonadota</taxon>
        <taxon>Alphaproteobacteria</taxon>
        <taxon>Hyphomicrobiales</taxon>
        <taxon>Nitrobacteraceae</taxon>
        <taxon>Bradyrhizobium</taxon>
    </lineage>
</organism>
<accession>A4YJV1</accession>